<comment type="function">
    <text evidence="1">Catalyzes the conversion of D-ribulose 5-phosphate to formate and 3,4-dihydroxy-2-butanone 4-phosphate.</text>
</comment>
<comment type="function">
    <text evidence="1">Catalyzes the conversion of GTP to 2,5-diamino-6-ribosylamino-4(3H)-pyrimidinone 5'-phosphate (DARP), formate and pyrophosphate.</text>
</comment>
<comment type="catalytic activity">
    <reaction evidence="1">
        <text>D-ribulose 5-phosphate = (2S)-2-hydroxy-3-oxobutyl phosphate + formate + H(+)</text>
        <dbReference type="Rhea" id="RHEA:18457"/>
        <dbReference type="ChEBI" id="CHEBI:15378"/>
        <dbReference type="ChEBI" id="CHEBI:15740"/>
        <dbReference type="ChEBI" id="CHEBI:58121"/>
        <dbReference type="ChEBI" id="CHEBI:58830"/>
        <dbReference type="EC" id="4.1.99.12"/>
    </reaction>
</comment>
<comment type="catalytic activity">
    <reaction evidence="1">
        <text>GTP + 4 H2O = 2,5-diamino-6-hydroxy-4-(5-phosphoribosylamino)-pyrimidine + formate + 2 phosphate + 3 H(+)</text>
        <dbReference type="Rhea" id="RHEA:23704"/>
        <dbReference type="ChEBI" id="CHEBI:15377"/>
        <dbReference type="ChEBI" id="CHEBI:15378"/>
        <dbReference type="ChEBI" id="CHEBI:15740"/>
        <dbReference type="ChEBI" id="CHEBI:37565"/>
        <dbReference type="ChEBI" id="CHEBI:43474"/>
        <dbReference type="ChEBI" id="CHEBI:58614"/>
        <dbReference type="EC" id="3.5.4.25"/>
    </reaction>
</comment>
<comment type="cofactor">
    <cofactor evidence="1">
        <name>Mg(2+)</name>
        <dbReference type="ChEBI" id="CHEBI:18420"/>
    </cofactor>
    <cofactor evidence="1">
        <name>Mn(2+)</name>
        <dbReference type="ChEBI" id="CHEBI:29035"/>
    </cofactor>
    <text evidence="1">Binds 2 divalent metal cations per subunit. Magnesium or manganese.</text>
</comment>
<comment type="cofactor">
    <cofactor evidence="1">
        <name>Zn(2+)</name>
        <dbReference type="ChEBI" id="CHEBI:29105"/>
    </cofactor>
    <text evidence="1">Binds 1 zinc ion per subunit.</text>
</comment>
<comment type="pathway">
    <text evidence="1">Cofactor biosynthesis; riboflavin biosynthesis; 2-hydroxy-3-oxobutyl phosphate from D-ribulose 5-phosphate: step 1/1.</text>
</comment>
<comment type="pathway">
    <text evidence="1">Cofactor biosynthesis; riboflavin biosynthesis; 5-amino-6-(D-ribitylamino)uracil from GTP: step 1/4.</text>
</comment>
<comment type="similarity">
    <text evidence="1">In the N-terminal section; belongs to the DHBP synthase family.</text>
</comment>
<comment type="similarity">
    <text evidence="1">In the C-terminal section; belongs to the GTP cyclohydrolase II family.</text>
</comment>
<reference key="1">
    <citation type="submission" date="2003-10" db="EMBL/GenBank/DDBJ databases">
        <title>The complete genome sequence of the alkaliphilic Bacillus clausii KSM-K16.</title>
        <authorList>
            <person name="Takaki Y."/>
            <person name="Kageyama Y."/>
            <person name="Shimamura S."/>
            <person name="Suzuki H."/>
            <person name="Nishi S."/>
            <person name="Hatada Y."/>
            <person name="Kawai S."/>
            <person name="Ito S."/>
            <person name="Horikoshi K."/>
        </authorList>
    </citation>
    <scope>NUCLEOTIDE SEQUENCE [LARGE SCALE GENOMIC DNA]</scope>
    <source>
        <strain>KSM-K16</strain>
    </source>
</reference>
<name>RIBBA_SHOC1</name>
<organism>
    <name type="scientific">Shouchella clausii (strain KSM-K16)</name>
    <name type="common">Alkalihalobacillus clausii</name>
    <dbReference type="NCBI Taxonomy" id="66692"/>
    <lineage>
        <taxon>Bacteria</taxon>
        <taxon>Bacillati</taxon>
        <taxon>Bacillota</taxon>
        <taxon>Bacilli</taxon>
        <taxon>Bacillales</taxon>
        <taxon>Bacillaceae</taxon>
        <taxon>Shouchella</taxon>
    </lineage>
</organism>
<evidence type="ECO:0000255" key="1">
    <source>
        <dbReference type="HAMAP-Rule" id="MF_01283"/>
    </source>
</evidence>
<gene>
    <name evidence="1" type="primary">ribBA</name>
    <name type="ordered locus">ABC1812</name>
</gene>
<keyword id="KW-0342">GTP-binding</keyword>
<keyword id="KW-0378">Hydrolase</keyword>
<keyword id="KW-0456">Lyase</keyword>
<keyword id="KW-0460">Magnesium</keyword>
<keyword id="KW-0464">Manganese</keyword>
<keyword id="KW-0479">Metal-binding</keyword>
<keyword id="KW-0511">Multifunctional enzyme</keyword>
<keyword id="KW-0547">Nucleotide-binding</keyword>
<keyword id="KW-1185">Reference proteome</keyword>
<keyword id="KW-0686">Riboflavin biosynthesis</keyword>
<keyword id="KW-0862">Zinc</keyword>
<accession>Q5WH08</accession>
<sequence>MFESIDEAITQLKAGGMILVVDDEDRENEGDFLALAETASPETINFMATHGRGLICVPLTEEQAERLQLGQMVSHSTDPHGTAFTVSVDHSHTTTGISAFERAETVRALADANAQPSDFKRPGHVFPLVAKNGGVLRRAGHTEAAVDFAKLCGAKPAGVICEVMNEDGSMARVPELRIIADQHNLPLVTIKDLIAYRRKTEKVVTREVAISLPTEYGDFKAVGYTNTIDGKESVALVKGDVGNGEPVLVRVHSECLTGDVFGSKRCDCGPQLHAALKQIEAEGRGVLLYMKQEGRGIGLINKFRAYKLQEEGYDTVEANERLGFPADLREYGIGAQILRDLGIRDMRLLTNNPRKIAGLEGYDLNIVERVPLQMEAVAENERYLHTKREKLGHMLNL</sequence>
<protein>
    <recommendedName>
        <fullName evidence="1">Riboflavin biosynthesis protein RibBA</fullName>
    </recommendedName>
    <domain>
        <recommendedName>
            <fullName evidence="1">3,4-dihydroxy-2-butanone 4-phosphate synthase</fullName>
            <shortName evidence="1">DHBP synthase</shortName>
            <ecNumber evidence="1">4.1.99.12</ecNumber>
        </recommendedName>
    </domain>
    <domain>
        <recommendedName>
            <fullName evidence="1">GTP cyclohydrolase-2</fullName>
            <ecNumber evidence="1">3.5.4.25</ecNumber>
        </recommendedName>
        <alternativeName>
            <fullName evidence="1">GTP cyclohydrolase II</fullName>
        </alternativeName>
    </domain>
</protein>
<feature type="chain" id="PRO_1000067420" description="Riboflavin biosynthesis protein RibBA">
    <location>
        <begin position="1"/>
        <end position="397"/>
    </location>
</feature>
<feature type="region of interest" description="DHBP synthase">
    <location>
        <begin position="1"/>
        <end position="199"/>
    </location>
</feature>
<feature type="region of interest" description="GTP cyclohydrolase II">
    <location>
        <begin position="200"/>
        <end position="397"/>
    </location>
</feature>
<feature type="active site" description="Proton acceptor; for GTP cyclohydrolase activity" evidence="1">
    <location>
        <position position="327"/>
    </location>
</feature>
<feature type="active site" description="Nucleophile; for GTP cyclohydrolase activity" evidence="1">
    <location>
        <position position="329"/>
    </location>
</feature>
<feature type="binding site" evidence="1">
    <location>
        <begin position="26"/>
        <end position="27"/>
    </location>
    <ligand>
        <name>D-ribulose 5-phosphate</name>
        <dbReference type="ChEBI" id="CHEBI:58121"/>
    </ligand>
</feature>
<feature type="binding site" evidence="1">
    <location>
        <position position="27"/>
    </location>
    <ligand>
        <name>Mg(2+)</name>
        <dbReference type="ChEBI" id="CHEBI:18420"/>
        <label>1</label>
    </ligand>
</feature>
<feature type="binding site" evidence="1">
    <location>
        <position position="27"/>
    </location>
    <ligand>
        <name>Mg(2+)</name>
        <dbReference type="ChEBI" id="CHEBI:18420"/>
        <label>2</label>
    </ligand>
</feature>
<feature type="binding site" evidence="1">
    <location>
        <position position="31"/>
    </location>
    <ligand>
        <name>D-ribulose 5-phosphate</name>
        <dbReference type="ChEBI" id="CHEBI:58121"/>
    </ligand>
</feature>
<feature type="binding site" evidence="1">
    <location>
        <begin position="138"/>
        <end position="142"/>
    </location>
    <ligand>
        <name>D-ribulose 5-phosphate</name>
        <dbReference type="ChEBI" id="CHEBI:58121"/>
    </ligand>
</feature>
<feature type="binding site" evidence="1">
    <location>
        <position position="141"/>
    </location>
    <ligand>
        <name>Mg(2+)</name>
        <dbReference type="ChEBI" id="CHEBI:18420"/>
        <label>2</label>
    </ligand>
</feature>
<feature type="binding site" evidence="1">
    <location>
        <position position="162"/>
    </location>
    <ligand>
        <name>D-ribulose 5-phosphate</name>
        <dbReference type="ChEBI" id="CHEBI:58121"/>
    </ligand>
</feature>
<feature type="binding site" evidence="1">
    <location>
        <begin position="250"/>
        <end position="254"/>
    </location>
    <ligand>
        <name>GTP</name>
        <dbReference type="ChEBI" id="CHEBI:37565"/>
    </ligand>
</feature>
<feature type="binding site" evidence="1">
    <location>
        <position position="255"/>
    </location>
    <ligand>
        <name>Zn(2+)</name>
        <dbReference type="ChEBI" id="CHEBI:29105"/>
        <note>catalytic</note>
    </ligand>
</feature>
<feature type="binding site" evidence="1">
    <location>
        <position position="266"/>
    </location>
    <ligand>
        <name>Zn(2+)</name>
        <dbReference type="ChEBI" id="CHEBI:29105"/>
        <note>catalytic</note>
    </ligand>
</feature>
<feature type="binding site" evidence="1">
    <location>
        <position position="268"/>
    </location>
    <ligand>
        <name>Zn(2+)</name>
        <dbReference type="ChEBI" id="CHEBI:29105"/>
        <note>catalytic</note>
    </ligand>
</feature>
<feature type="binding site" evidence="1">
    <location>
        <position position="271"/>
    </location>
    <ligand>
        <name>GTP</name>
        <dbReference type="ChEBI" id="CHEBI:37565"/>
    </ligand>
</feature>
<feature type="binding site" evidence="1">
    <location>
        <begin position="293"/>
        <end position="295"/>
    </location>
    <ligand>
        <name>GTP</name>
        <dbReference type="ChEBI" id="CHEBI:37565"/>
    </ligand>
</feature>
<feature type="binding site" evidence="1">
    <location>
        <position position="315"/>
    </location>
    <ligand>
        <name>GTP</name>
        <dbReference type="ChEBI" id="CHEBI:37565"/>
    </ligand>
</feature>
<feature type="binding site" evidence="1">
    <location>
        <position position="350"/>
    </location>
    <ligand>
        <name>GTP</name>
        <dbReference type="ChEBI" id="CHEBI:37565"/>
    </ligand>
</feature>
<feature type="binding site" evidence="1">
    <location>
        <position position="355"/>
    </location>
    <ligand>
        <name>GTP</name>
        <dbReference type="ChEBI" id="CHEBI:37565"/>
    </ligand>
</feature>
<feature type="site" description="Essential for DHBP synthase activity" evidence="1">
    <location>
        <position position="124"/>
    </location>
</feature>
<feature type="site" description="Essential for DHBP synthase activity" evidence="1">
    <location>
        <position position="162"/>
    </location>
</feature>
<dbReference type="EC" id="4.1.99.12" evidence="1"/>
<dbReference type="EC" id="3.5.4.25" evidence="1"/>
<dbReference type="EMBL" id="AP006627">
    <property type="protein sequence ID" value="BAD64347.1"/>
    <property type="molecule type" value="Genomic_DNA"/>
</dbReference>
<dbReference type="RefSeq" id="WP_011246655.1">
    <property type="nucleotide sequence ID" value="NC_006582.1"/>
</dbReference>
<dbReference type="SMR" id="Q5WH08"/>
<dbReference type="STRING" id="66692.ABC1812"/>
<dbReference type="KEGG" id="bcl:ABC1812"/>
<dbReference type="eggNOG" id="COG0108">
    <property type="taxonomic scope" value="Bacteria"/>
</dbReference>
<dbReference type="eggNOG" id="COG0807">
    <property type="taxonomic scope" value="Bacteria"/>
</dbReference>
<dbReference type="HOGENOM" id="CLU_020273_1_2_9"/>
<dbReference type="OrthoDB" id="9793111at2"/>
<dbReference type="UniPathway" id="UPA00275">
    <property type="reaction ID" value="UER00399"/>
</dbReference>
<dbReference type="UniPathway" id="UPA00275">
    <property type="reaction ID" value="UER00400"/>
</dbReference>
<dbReference type="Proteomes" id="UP000001168">
    <property type="component" value="Chromosome"/>
</dbReference>
<dbReference type="GO" id="GO:0005829">
    <property type="term" value="C:cytosol"/>
    <property type="evidence" value="ECO:0007669"/>
    <property type="project" value="TreeGrafter"/>
</dbReference>
<dbReference type="GO" id="GO:0008686">
    <property type="term" value="F:3,4-dihydroxy-2-butanone-4-phosphate synthase activity"/>
    <property type="evidence" value="ECO:0007669"/>
    <property type="project" value="UniProtKB-UniRule"/>
</dbReference>
<dbReference type="GO" id="GO:0005525">
    <property type="term" value="F:GTP binding"/>
    <property type="evidence" value="ECO:0007669"/>
    <property type="project" value="UniProtKB-KW"/>
</dbReference>
<dbReference type="GO" id="GO:0003935">
    <property type="term" value="F:GTP cyclohydrolase II activity"/>
    <property type="evidence" value="ECO:0007669"/>
    <property type="project" value="UniProtKB-UniRule"/>
</dbReference>
<dbReference type="GO" id="GO:0000287">
    <property type="term" value="F:magnesium ion binding"/>
    <property type="evidence" value="ECO:0007669"/>
    <property type="project" value="UniProtKB-UniRule"/>
</dbReference>
<dbReference type="GO" id="GO:0030145">
    <property type="term" value="F:manganese ion binding"/>
    <property type="evidence" value="ECO:0007669"/>
    <property type="project" value="UniProtKB-UniRule"/>
</dbReference>
<dbReference type="GO" id="GO:0008270">
    <property type="term" value="F:zinc ion binding"/>
    <property type="evidence" value="ECO:0007669"/>
    <property type="project" value="UniProtKB-UniRule"/>
</dbReference>
<dbReference type="GO" id="GO:0009231">
    <property type="term" value="P:riboflavin biosynthetic process"/>
    <property type="evidence" value="ECO:0007669"/>
    <property type="project" value="UniProtKB-UniRule"/>
</dbReference>
<dbReference type="CDD" id="cd00641">
    <property type="entry name" value="GTP_cyclohydro2"/>
    <property type="match status" value="1"/>
</dbReference>
<dbReference type="FunFam" id="3.40.50.10990:FF:000001">
    <property type="entry name" value="Riboflavin biosynthesis protein RibBA"/>
    <property type="match status" value="1"/>
</dbReference>
<dbReference type="FunFam" id="3.90.870.10:FF:000001">
    <property type="entry name" value="Riboflavin biosynthesis protein RibBA"/>
    <property type="match status" value="1"/>
</dbReference>
<dbReference type="Gene3D" id="3.90.870.10">
    <property type="entry name" value="DHBP synthase"/>
    <property type="match status" value="1"/>
</dbReference>
<dbReference type="Gene3D" id="3.40.50.10990">
    <property type="entry name" value="GTP cyclohydrolase II"/>
    <property type="match status" value="1"/>
</dbReference>
<dbReference type="HAMAP" id="MF_00179">
    <property type="entry name" value="RibA"/>
    <property type="match status" value="1"/>
</dbReference>
<dbReference type="HAMAP" id="MF_00180">
    <property type="entry name" value="RibB"/>
    <property type="match status" value="1"/>
</dbReference>
<dbReference type="HAMAP" id="MF_01283">
    <property type="entry name" value="RibBA"/>
    <property type="match status" value="1"/>
</dbReference>
<dbReference type="InterPro" id="IPR017945">
    <property type="entry name" value="DHBP_synth_RibB-like_a/b_dom"/>
</dbReference>
<dbReference type="InterPro" id="IPR000422">
    <property type="entry name" value="DHBP_synthase_RibB"/>
</dbReference>
<dbReference type="InterPro" id="IPR032677">
    <property type="entry name" value="GTP_cyclohydro_II"/>
</dbReference>
<dbReference type="InterPro" id="IPR000926">
    <property type="entry name" value="RibA"/>
</dbReference>
<dbReference type="InterPro" id="IPR036144">
    <property type="entry name" value="RibA-like_sf"/>
</dbReference>
<dbReference type="InterPro" id="IPR016299">
    <property type="entry name" value="Riboflavin_synth_RibBA"/>
</dbReference>
<dbReference type="NCBIfam" id="NF001591">
    <property type="entry name" value="PRK00393.1"/>
    <property type="match status" value="1"/>
</dbReference>
<dbReference type="NCBIfam" id="NF006803">
    <property type="entry name" value="PRK09311.1"/>
    <property type="match status" value="1"/>
</dbReference>
<dbReference type="NCBIfam" id="TIGR00505">
    <property type="entry name" value="ribA"/>
    <property type="match status" value="1"/>
</dbReference>
<dbReference type="NCBIfam" id="TIGR00506">
    <property type="entry name" value="ribB"/>
    <property type="match status" value="1"/>
</dbReference>
<dbReference type="PANTHER" id="PTHR21327:SF18">
    <property type="entry name" value="3,4-DIHYDROXY-2-BUTANONE 4-PHOSPHATE SYNTHASE"/>
    <property type="match status" value="1"/>
</dbReference>
<dbReference type="PANTHER" id="PTHR21327">
    <property type="entry name" value="GTP CYCLOHYDROLASE II-RELATED"/>
    <property type="match status" value="1"/>
</dbReference>
<dbReference type="Pfam" id="PF00926">
    <property type="entry name" value="DHBP_synthase"/>
    <property type="match status" value="1"/>
</dbReference>
<dbReference type="Pfam" id="PF00925">
    <property type="entry name" value="GTP_cyclohydro2"/>
    <property type="match status" value="1"/>
</dbReference>
<dbReference type="PIRSF" id="PIRSF001259">
    <property type="entry name" value="RibA"/>
    <property type="match status" value="1"/>
</dbReference>
<dbReference type="SUPFAM" id="SSF142695">
    <property type="entry name" value="RibA-like"/>
    <property type="match status" value="1"/>
</dbReference>
<dbReference type="SUPFAM" id="SSF55821">
    <property type="entry name" value="YrdC/RibB"/>
    <property type="match status" value="1"/>
</dbReference>
<proteinExistence type="inferred from homology"/>